<reference key="1">
    <citation type="submission" date="1993-08" db="EMBL/GenBank/DDBJ databases">
        <authorList>
            <person name="Bringloe D.H."/>
            <person name="Gray J.C."/>
        </authorList>
    </citation>
    <scope>NUCLEOTIDE SEQUENCE [GENOMIC DNA]</scope>
    <source>
        <strain>cv. Chinese Spring</strain>
    </source>
</reference>
<reference key="2">
    <citation type="journal article" date="1979" name="Biochem. J.">
        <title>The amino acid sequence of ferredoxin from Triticum aestivum (wheat).</title>
        <authorList>
            <person name="Takruri I.A.H."/>
            <person name="Boulter D."/>
        </authorList>
    </citation>
    <scope>PROTEIN SEQUENCE OF 47-143</scope>
</reference>
<accession>P00228</accession>
<dbReference type="EMBL" id="X75089">
    <property type="protein sequence ID" value="CAA52980.1"/>
    <property type="molecule type" value="Genomic_DNA"/>
</dbReference>
<dbReference type="PIR" id="S52993">
    <property type="entry name" value="FEWT"/>
</dbReference>
<dbReference type="SMR" id="P00228"/>
<dbReference type="STRING" id="4565.P00228"/>
<dbReference type="PaxDb" id="4565-Traes_7BL_0B5D2BAF0.1"/>
<dbReference type="EnsemblPlants" id="TraesARI7A03G03916460.1">
    <property type="protein sequence ID" value="TraesARI7A03G03916460.1.CDS1"/>
    <property type="gene ID" value="TraesARI7A03G03916460"/>
</dbReference>
<dbReference type="EnsemblPlants" id="TraesARI7B03G04135010.1">
    <property type="protein sequence ID" value="TraesARI7B03G04135010.1.CDS1"/>
    <property type="gene ID" value="TraesARI7B03G04135010"/>
</dbReference>
<dbReference type="EnsemblPlants" id="TraesCAD_scaffold_002919_01G000100.1">
    <property type="protein sequence ID" value="TraesCAD_scaffold_002919_01G000100.1"/>
    <property type="gene ID" value="TraesCAD_scaffold_002919_01G000100"/>
</dbReference>
<dbReference type="EnsemblPlants" id="TraesCAD_scaffold_134402_01G000100.1">
    <property type="protein sequence ID" value="TraesCAD_scaffold_134402_01G000100.1"/>
    <property type="gene ID" value="TraesCAD_scaffold_134402_01G000100"/>
</dbReference>
<dbReference type="EnsemblPlants" id="TraesCAD_scaffold_166582_01G000100.1">
    <property type="protein sequence ID" value="TraesCAD_scaffold_166582_01G000100.1"/>
    <property type="gene ID" value="TraesCAD_scaffold_166582_01G000100"/>
</dbReference>
<dbReference type="EnsemblPlants" id="TraesCLE_scaffold_001556_01G000100.1">
    <property type="protein sequence ID" value="TraesCLE_scaffold_001556_01G000100.1"/>
    <property type="gene ID" value="TraesCLE_scaffold_001556_01G000100"/>
</dbReference>
<dbReference type="EnsemblPlants" id="TraesCLE_scaffold_165303_01G000100.1">
    <property type="protein sequence ID" value="TraesCLE_scaffold_165303_01G000100.1"/>
    <property type="gene ID" value="TraesCLE_scaffold_165303_01G000100"/>
</dbReference>
<dbReference type="EnsemblPlants" id="TraesCS7A02G325400.1">
    <property type="protein sequence ID" value="TraesCS7A02G325400.1.cds1"/>
    <property type="gene ID" value="TraesCS7A02G325400"/>
</dbReference>
<dbReference type="EnsemblPlants" id="TraesCS7A03G0804400.1">
    <property type="protein sequence ID" value="TraesCS7A03G0804400.1.CDS1"/>
    <property type="gene ID" value="TraesCS7A03G0804400"/>
</dbReference>
<dbReference type="EnsemblPlants" id="TraesCS7B02G226100.1">
    <property type="protein sequence ID" value="TraesCS7B02G226100.1.cds1"/>
    <property type="gene ID" value="TraesCS7B02G226100"/>
</dbReference>
<dbReference type="EnsemblPlants" id="TraesCS7B03G0641200.1">
    <property type="protein sequence ID" value="TraesCS7B03G0641200.1.CDS1"/>
    <property type="gene ID" value="TraesCS7B03G0641200"/>
</dbReference>
<dbReference type="EnsemblPlants" id="TraesJAG7A03G03925070.1">
    <property type="protein sequence ID" value="TraesJAG7A03G03925070.1.CDS1"/>
    <property type="gene ID" value="TraesJAG7A03G03925070"/>
</dbReference>
<dbReference type="EnsemblPlants" id="TraesJAG7B03G04139430.1">
    <property type="protein sequence ID" value="TraesJAG7B03G04139430.1.CDS1"/>
    <property type="gene ID" value="TraesJAG7B03G04139430"/>
</dbReference>
<dbReference type="EnsemblPlants" id="TraesJUL7A03G03979760.1">
    <property type="protein sequence ID" value="TraesJUL7A03G03979760.1.CDS1"/>
    <property type="gene ID" value="TraesJUL7A03G03979760"/>
</dbReference>
<dbReference type="EnsemblPlants" id="TraesJUL7A03G03979760.3">
    <property type="protein sequence ID" value="TraesJUL7A03G03979760.3.CDS1"/>
    <property type="gene ID" value="TraesJUL7A03G03979760"/>
</dbReference>
<dbReference type="EnsemblPlants" id="TraesJUL7B03G04195920.1">
    <property type="protein sequence ID" value="TraesJUL7B03G04195920.1.CDS1"/>
    <property type="gene ID" value="TraesJUL7B03G04195920"/>
</dbReference>
<dbReference type="EnsemblPlants" id="TraesKAR7A01G0304380.1">
    <property type="protein sequence ID" value="cds.TraesKAR7A01G0304380.1"/>
    <property type="gene ID" value="TraesKAR7A01G0304380"/>
</dbReference>
<dbReference type="EnsemblPlants" id="TraesKAR7B01G0280140.1">
    <property type="protein sequence ID" value="cds.TraesKAR7B01G0280140.1"/>
    <property type="gene ID" value="TraesKAR7B01G0280140"/>
</dbReference>
<dbReference type="EnsemblPlants" id="TraesLAC7A03G03896490.1">
    <property type="protein sequence ID" value="TraesLAC7A03G03896490.1.CDS1"/>
    <property type="gene ID" value="TraesLAC7A03G03896490"/>
</dbReference>
<dbReference type="EnsemblPlants" id="TraesLAC7B03G04102490.1">
    <property type="protein sequence ID" value="TraesLAC7B03G04102490.1.CDS1"/>
    <property type="gene ID" value="TraesLAC7B03G04102490"/>
</dbReference>
<dbReference type="EnsemblPlants" id="TraesLDM7A03G03946750.1">
    <property type="protein sequence ID" value="TraesLDM7A03G03946750.1.CDS1"/>
    <property type="gene ID" value="TraesLDM7A03G03946750"/>
</dbReference>
<dbReference type="EnsemblPlants" id="TraesLDM7B03G04160390.1">
    <property type="protein sequence ID" value="TraesLDM7B03G04160390.1.CDS1"/>
    <property type="gene ID" value="TraesLDM7B03G04160390"/>
</dbReference>
<dbReference type="EnsemblPlants" id="TraesMAC7A03G03942580.1">
    <property type="protein sequence ID" value="TraesMAC7A03G03942580.1.CDS1"/>
    <property type="gene ID" value="TraesMAC7A03G03942580"/>
</dbReference>
<dbReference type="EnsemblPlants" id="TraesMAC7B03G04151940.1">
    <property type="protein sequence ID" value="TraesMAC7B03G04151940.1.CDS1"/>
    <property type="gene ID" value="TraesMAC7B03G04151940"/>
</dbReference>
<dbReference type="EnsemblPlants" id="TraesNOR7A03G03986750.1">
    <property type="protein sequence ID" value="TraesNOR7A03G03986750.1.CDS1"/>
    <property type="gene ID" value="TraesNOR7A03G03986750"/>
</dbReference>
<dbReference type="EnsemblPlants" id="TraesNOR7B03G04203140.1">
    <property type="protein sequence ID" value="TraesNOR7B03G04203140.1.CDS1"/>
    <property type="gene ID" value="TraesNOR7B03G04203140"/>
</dbReference>
<dbReference type="EnsemblPlants" id="TraesPARA_EIv1.0_2306120.1">
    <property type="protein sequence ID" value="TraesPARA_EIv1.0_2306120.1.CDS1"/>
    <property type="gene ID" value="TraesPARA_EIv1.0_2306120"/>
</dbReference>
<dbReference type="EnsemblPlants" id="TraesPARA_EIv1.0_2429300.1">
    <property type="protein sequence ID" value="TraesPARA_EIv1.0_2429300.1.CDS1"/>
    <property type="gene ID" value="TraesPARA_EIv1.0_2429300"/>
</dbReference>
<dbReference type="EnsemblPlants" id="TraesRN7A0100786100.1">
    <property type="protein sequence ID" value="TraesRN7A0100786100.1"/>
    <property type="gene ID" value="TraesRN7A0100786100"/>
</dbReference>
<dbReference type="EnsemblPlants" id="TraesRN7B0100643600.1">
    <property type="protein sequence ID" value="TraesRN7B0100643600.1"/>
    <property type="gene ID" value="TraesRN7B0100643600"/>
</dbReference>
<dbReference type="EnsemblPlants" id="TraesRN7D0100787400.1">
    <property type="protein sequence ID" value="TraesRN7D0100787400.1"/>
    <property type="gene ID" value="TraesRN7D0100787400"/>
</dbReference>
<dbReference type="EnsemblPlants" id="TraesROB_scaffold_003895_01G000100.1">
    <property type="protein sequence ID" value="TraesROB_scaffold_003895_01G000100.1"/>
    <property type="gene ID" value="TraesROB_scaffold_003895_01G000100"/>
</dbReference>
<dbReference type="EnsemblPlants" id="TraesROB_scaffold_166817_01G000100.1">
    <property type="protein sequence ID" value="TraesROB_scaffold_166817_01G000100.1"/>
    <property type="gene ID" value="TraesROB_scaffold_166817_01G000100"/>
</dbReference>
<dbReference type="EnsemblPlants" id="TraesSTA7B03G04152830.1">
    <property type="protein sequence ID" value="TraesSTA7B03G04152830.1.CDS1"/>
    <property type="gene ID" value="TraesSTA7B03G04152830"/>
</dbReference>
<dbReference type="EnsemblPlants" id="TraesSYM7A03G03896470.1">
    <property type="protein sequence ID" value="TraesSYM7A03G03896470.1.CDS1"/>
    <property type="gene ID" value="TraesSYM7A03G03896470"/>
</dbReference>
<dbReference type="EnsemblPlants" id="TraesSYM7B03G04205950.1">
    <property type="protein sequence ID" value="TraesSYM7B03G04205950.1.CDS1"/>
    <property type="gene ID" value="TraesSYM7B03G04205950"/>
</dbReference>
<dbReference type="EnsemblPlants" id="TraesWEE_scaffold_000640_01G000600.1">
    <property type="protein sequence ID" value="TraesWEE_scaffold_000640_01G000600.1"/>
    <property type="gene ID" value="TraesWEE_scaffold_000640_01G000600"/>
</dbReference>
<dbReference type="EnsemblPlants" id="TraesWEE_scaffold_120293_01G000100.1">
    <property type="protein sequence ID" value="TraesWEE_scaffold_120293_01G000100.1"/>
    <property type="gene ID" value="TraesWEE_scaffold_120293_01G000100"/>
</dbReference>
<dbReference type="Gramene" id="TraesARI7A03G03916460.1">
    <property type="protein sequence ID" value="TraesARI7A03G03916460.1.CDS1"/>
    <property type="gene ID" value="TraesARI7A03G03916460"/>
</dbReference>
<dbReference type="Gramene" id="TraesARI7B03G04135010.1">
    <property type="protein sequence ID" value="TraesARI7B03G04135010.1.CDS1"/>
    <property type="gene ID" value="TraesARI7B03G04135010"/>
</dbReference>
<dbReference type="Gramene" id="TraesCAD_scaffold_002919_01G000100.1">
    <property type="protein sequence ID" value="TraesCAD_scaffold_002919_01G000100.1"/>
    <property type="gene ID" value="TraesCAD_scaffold_002919_01G000100"/>
</dbReference>
<dbReference type="Gramene" id="TraesCAD_scaffold_134402_01G000100.1">
    <property type="protein sequence ID" value="TraesCAD_scaffold_134402_01G000100.1"/>
    <property type="gene ID" value="TraesCAD_scaffold_134402_01G000100"/>
</dbReference>
<dbReference type="Gramene" id="TraesCAD_scaffold_166582_01G000100.1">
    <property type="protein sequence ID" value="TraesCAD_scaffold_166582_01G000100.1"/>
    <property type="gene ID" value="TraesCAD_scaffold_166582_01G000100"/>
</dbReference>
<dbReference type="Gramene" id="TraesCLE_scaffold_001556_01G000100.1">
    <property type="protein sequence ID" value="TraesCLE_scaffold_001556_01G000100.1"/>
    <property type="gene ID" value="TraesCLE_scaffold_001556_01G000100"/>
</dbReference>
<dbReference type="Gramene" id="TraesCLE_scaffold_165303_01G000100.1">
    <property type="protein sequence ID" value="TraesCLE_scaffold_165303_01G000100.1"/>
    <property type="gene ID" value="TraesCLE_scaffold_165303_01G000100"/>
</dbReference>
<dbReference type="Gramene" id="TraesCS7A02G325400.1">
    <property type="protein sequence ID" value="TraesCS7A02G325400.1.cds1"/>
    <property type="gene ID" value="TraesCS7A02G325400"/>
</dbReference>
<dbReference type="Gramene" id="TraesCS7A03G0804400.1">
    <property type="protein sequence ID" value="TraesCS7A03G0804400.1.CDS1"/>
    <property type="gene ID" value="TraesCS7A03G0804400"/>
</dbReference>
<dbReference type="Gramene" id="TraesCS7B02G226100.1">
    <property type="protein sequence ID" value="TraesCS7B02G226100.1.cds1"/>
    <property type="gene ID" value="TraesCS7B02G226100"/>
</dbReference>
<dbReference type="Gramene" id="TraesCS7B03G0641200.1">
    <property type="protein sequence ID" value="TraesCS7B03G0641200.1.CDS1"/>
    <property type="gene ID" value="TraesCS7B03G0641200"/>
</dbReference>
<dbReference type="Gramene" id="TraesJAG7A03G03925070.1">
    <property type="protein sequence ID" value="TraesJAG7A03G03925070.1.CDS1"/>
    <property type="gene ID" value="TraesJAG7A03G03925070"/>
</dbReference>
<dbReference type="Gramene" id="TraesJAG7B03G04139430.1">
    <property type="protein sequence ID" value="TraesJAG7B03G04139430.1.CDS1"/>
    <property type="gene ID" value="TraesJAG7B03G04139430"/>
</dbReference>
<dbReference type="Gramene" id="TraesJUL7A03G03979760.1">
    <property type="protein sequence ID" value="TraesJUL7A03G03979760.1.CDS1"/>
    <property type="gene ID" value="TraesJUL7A03G03979760"/>
</dbReference>
<dbReference type="Gramene" id="TraesJUL7A03G03979760.3">
    <property type="protein sequence ID" value="TraesJUL7A03G03979760.3.CDS1"/>
    <property type="gene ID" value="TraesJUL7A03G03979760"/>
</dbReference>
<dbReference type="Gramene" id="TraesJUL7B03G04195920.1">
    <property type="protein sequence ID" value="TraesJUL7B03G04195920.1.CDS1"/>
    <property type="gene ID" value="TraesJUL7B03G04195920"/>
</dbReference>
<dbReference type="Gramene" id="TraesKAR7A01G0304380.1">
    <property type="protein sequence ID" value="cds.TraesKAR7A01G0304380.1"/>
    <property type="gene ID" value="TraesKAR7A01G0304380"/>
</dbReference>
<dbReference type="Gramene" id="TraesKAR7B01G0280140.1">
    <property type="protein sequence ID" value="cds.TraesKAR7B01G0280140.1"/>
    <property type="gene ID" value="TraesKAR7B01G0280140"/>
</dbReference>
<dbReference type="Gramene" id="TraesLAC7A03G03896490.1">
    <property type="protein sequence ID" value="TraesLAC7A03G03896490.1.CDS1"/>
    <property type="gene ID" value="TraesLAC7A03G03896490"/>
</dbReference>
<dbReference type="Gramene" id="TraesLAC7B03G04102490.1">
    <property type="protein sequence ID" value="TraesLAC7B03G04102490.1.CDS1"/>
    <property type="gene ID" value="TraesLAC7B03G04102490"/>
</dbReference>
<dbReference type="Gramene" id="TraesLDM7A03G03946750.1">
    <property type="protein sequence ID" value="TraesLDM7A03G03946750.1.CDS1"/>
    <property type="gene ID" value="TraesLDM7A03G03946750"/>
</dbReference>
<dbReference type="Gramene" id="TraesLDM7B03G04160390.1">
    <property type="protein sequence ID" value="TraesLDM7B03G04160390.1.CDS1"/>
    <property type="gene ID" value="TraesLDM7B03G04160390"/>
</dbReference>
<dbReference type="Gramene" id="TraesMAC7A03G03942580.1">
    <property type="protein sequence ID" value="TraesMAC7A03G03942580.1.CDS1"/>
    <property type="gene ID" value="TraesMAC7A03G03942580"/>
</dbReference>
<dbReference type="Gramene" id="TraesMAC7B03G04151940.1">
    <property type="protein sequence ID" value="TraesMAC7B03G04151940.1.CDS1"/>
    <property type="gene ID" value="TraesMAC7B03G04151940"/>
</dbReference>
<dbReference type="Gramene" id="TraesNOR7A03G03986750.1">
    <property type="protein sequence ID" value="TraesNOR7A03G03986750.1.CDS1"/>
    <property type="gene ID" value="TraesNOR7A03G03986750"/>
</dbReference>
<dbReference type="Gramene" id="TraesNOR7B03G04203140.1">
    <property type="protein sequence ID" value="TraesNOR7B03G04203140.1.CDS1"/>
    <property type="gene ID" value="TraesNOR7B03G04203140"/>
</dbReference>
<dbReference type="Gramene" id="TraesPARA_EIv1.0_2306120.1">
    <property type="protein sequence ID" value="TraesPARA_EIv1.0_2306120.1.CDS1"/>
    <property type="gene ID" value="TraesPARA_EIv1.0_2306120"/>
</dbReference>
<dbReference type="Gramene" id="TraesPARA_EIv1.0_2429300.1">
    <property type="protein sequence ID" value="TraesPARA_EIv1.0_2429300.1.CDS1"/>
    <property type="gene ID" value="TraesPARA_EIv1.0_2429300"/>
</dbReference>
<dbReference type="Gramene" id="TraesRN7A0100786100.1">
    <property type="protein sequence ID" value="TraesRN7A0100786100.1"/>
    <property type="gene ID" value="TraesRN7A0100786100"/>
</dbReference>
<dbReference type="Gramene" id="TraesRN7B0100643600.1">
    <property type="protein sequence ID" value="TraesRN7B0100643600.1"/>
    <property type="gene ID" value="TraesRN7B0100643600"/>
</dbReference>
<dbReference type="Gramene" id="TraesRN7D0100787400.1">
    <property type="protein sequence ID" value="TraesRN7D0100787400.1"/>
    <property type="gene ID" value="TraesRN7D0100787400"/>
</dbReference>
<dbReference type="Gramene" id="TraesROB_scaffold_003895_01G000100.1">
    <property type="protein sequence ID" value="TraesROB_scaffold_003895_01G000100.1"/>
    <property type="gene ID" value="TraesROB_scaffold_003895_01G000100"/>
</dbReference>
<dbReference type="Gramene" id="TraesROB_scaffold_166817_01G000100.1">
    <property type="protein sequence ID" value="TraesROB_scaffold_166817_01G000100.1"/>
    <property type="gene ID" value="TraesROB_scaffold_166817_01G000100"/>
</dbReference>
<dbReference type="Gramene" id="TraesSTA7B03G04152830.1">
    <property type="protein sequence ID" value="TraesSTA7B03G04152830.1.CDS1"/>
    <property type="gene ID" value="TraesSTA7B03G04152830"/>
</dbReference>
<dbReference type="Gramene" id="TraesSYM7A03G03896470.1">
    <property type="protein sequence ID" value="TraesSYM7A03G03896470.1.CDS1"/>
    <property type="gene ID" value="TraesSYM7A03G03896470"/>
</dbReference>
<dbReference type="Gramene" id="TraesSYM7B03G04205950.1">
    <property type="protein sequence ID" value="TraesSYM7B03G04205950.1.CDS1"/>
    <property type="gene ID" value="TraesSYM7B03G04205950"/>
</dbReference>
<dbReference type="Gramene" id="TraesWEE_scaffold_000640_01G000600.1">
    <property type="protein sequence ID" value="TraesWEE_scaffold_000640_01G000600.1"/>
    <property type="gene ID" value="TraesWEE_scaffold_000640_01G000600"/>
</dbReference>
<dbReference type="Gramene" id="TraesWEE_scaffold_120293_01G000100.1">
    <property type="protein sequence ID" value="TraesWEE_scaffold_120293_01G000100.1"/>
    <property type="gene ID" value="TraesWEE_scaffold_120293_01G000100"/>
</dbReference>
<dbReference type="eggNOG" id="ENOG502S3RJ">
    <property type="taxonomic scope" value="Eukaryota"/>
</dbReference>
<dbReference type="OMA" id="CEQNIEL"/>
<dbReference type="OrthoDB" id="1885901at2759"/>
<dbReference type="Proteomes" id="UP000019116">
    <property type="component" value="Chromosome 7A"/>
</dbReference>
<dbReference type="Proteomes" id="UP000019116">
    <property type="component" value="Chromosome 7B"/>
</dbReference>
<dbReference type="ExpressionAtlas" id="P00228">
    <property type="expression patterns" value="baseline and differential"/>
</dbReference>
<dbReference type="GO" id="GO:0009570">
    <property type="term" value="C:chloroplast stroma"/>
    <property type="evidence" value="ECO:0000318"/>
    <property type="project" value="GO_Central"/>
</dbReference>
<dbReference type="GO" id="GO:0051537">
    <property type="term" value="F:2 iron, 2 sulfur cluster binding"/>
    <property type="evidence" value="ECO:0007669"/>
    <property type="project" value="UniProtKB-KW"/>
</dbReference>
<dbReference type="GO" id="GO:0009055">
    <property type="term" value="F:electron transfer activity"/>
    <property type="evidence" value="ECO:0007669"/>
    <property type="project" value="InterPro"/>
</dbReference>
<dbReference type="GO" id="GO:0046872">
    <property type="term" value="F:metal ion binding"/>
    <property type="evidence" value="ECO:0007669"/>
    <property type="project" value="UniProtKB-KW"/>
</dbReference>
<dbReference type="GO" id="GO:0022900">
    <property type="term" value="P:electron transport chain"/>
    <property type="evidence" value="ECO:0007669"/>
    <property type="project" value="InterPro"/>
</dbReference>
<dbReference type="CDD" id="cd00207">
    <property type="entry name" value="fer2"/>
    <property type="match status" value="1"/>
</dbReference>
<dbReference type="FunFam" id="3.10.20.30:FF:000014">
    <property type="entry name" value="Ferredoxin"/>
    <property type="match status" value="1"/>
</dbReference>
<dbReference type="Gene3D" id="3.10.20.30">
    <property type="match status" value="1"/>
</dbReference>
<dbReference type="InterPro" id="IPR036010">
    <property type="entry name" value="2Fe-2S_ferredoxin-like_sf"/>
</dbReference>
<dbReference type="InterPro" id="IPR001041">
    <property type="entry name" value="2Fe-2S_ferredoxin-type"/>
</dbReference>
<dbReference type="InterPro" id="IPR006058">
    <property type="entry name" value="2Fe2S_fd_BS"/>
</dbReference>
<dbReference type="InterPro" id="IPR012675">
    <property type="entry name" value="Beta-grasp_dom_sf"/>
</dbReference>
<dbReference type="InterPro" id="IPR010241">
    <property type="entry name" value="Fd_pln"/>
</dbReference>
<dbReference type="NCBIfam" id="TIGR02008">
    <property type="entry name" value="fdx_plant"/>
    <property type="match status" value="1"/>
</dbReference>
<dbReference type="PANTHER" id="PTHR43112">
    <property type="entry name" value="FERREDOXIN"/>
    <property type="match status" value="1"/>
</dbReference>
<dbReference type="PANTHER" id="PTHR43112:SF3">
    <property type="entry name" value="FERREDOXIN-2, CHLOROPLASTIC"/>
    <property type="match status" value="1"/>
</dbReference>
<dbReference type="Pfam" id="PF00111">
    <property type="entry name" value="Fer2"/>
    <property type="match status" value="1"/>
</dbReference>
<dbReference type="SUPFAM" id="SSF54292">
    <property type="entry name" value="2Fe-2S ferredoxin-like"/>
    <property type="match status" value="1"/>
</dbReference>
<dbReference type="PROSITE" id="PS00197">
    <property type="entry name" value="2FE2S_FER_1"/>
    <property type="match status" value="1"/>
</dbReference>
<dbReference type="PROSITE" id="PS51085">
    <property type="entry name" value="2FE2S_FER_2"/>
    <property type="match status" value="1"/>
</dbReference>
<proteinExistence type="evidence at protein level"/>
<evidence type="ECO:0000250" key="1"/>
<evidence type="ECO:0000255" key="2">
    <source>
        <dbReference type="PROSITE-ProRule" id="PRU00465"/>
    </source>
</evidence>
<evidence type="ECO:0000269" key="3">
    <source>
    </source>
</evidence>
<evidence type="ECO:0000305" key="4"/>
<gene>
    <name type="primary">PETF</name>
</gene>
<comment type="function">
    <text>Ferredoxins are iron-sulfur proteins that transfer electrons in a wide variety of metabolic reactions.</text>
</comment>
<comment type="cofactor">
    <cofactor>
        <name>[2Fe-2S] cluster</name>
        <dbReference type="ChEBI" id="CHEBI:190135"/>
    </cofactor>
    <text>Binds 1 [2Fe-2S] cluster.</text>
</comment>
<comment type="subunit">
    <text evidence="1">Forms a complex with heterodimeric ferredoxin-thioredoxin reductase (FTR) and thioredoxin.</text>
</comment>
<comment type="subcellular location">
    <subcellularLocation>
        <location>Plastid</location>
        <location>Chloroplast</location>
    </subcellularLocation>
</comment>
<comment type="similarity">
    <text evidence="4">Belongs to the 2Fe2S plant-type ferredoxin family.</text>
</comment>
<organism>
    <name type="scientific">Triticum aestivum</name>
    <name type="common">Wheat</name>
    <dbReference type="NCBI Taxonomy" id="4565"/>
    <lineage>
        <taxon>Eukaryota</taxon>
        <taxon>Viridiplantae</taxon>
        <taxon>Streptophyta</taxon>
        <taxon>Embryophyta</taxon>
        <taxon>Tracheophyta</taxon>
        <taxon>Spermatophyta</taxon>
        <taxon>Magnoliopsida</taxon>
        <taxon>Liliopsida</taxon>
        <taxon>Poales</taxon>
        <taxon>Poaceae</taxon>
        <taxon>BOP clade</taxon>
        <taxon>Pooideae</taxon>
        <taxon>Triticodae</taxon>
        <taxon>Triticeae</taxon>
        <taxon>Triticinae</taxon>
        <taxon>Triticum</taxon>
    </lineage>
</organism>
<name>FER_WHEAT</name>
<protein>
    <recommendedName>
        <fullName>Ferredoxin, chloroplastic</fullName>
    </recommendedName>
</protein>
<keyword id="KW-0001">2Fe-2S</keyword>
<keyword id="KW-0150">Chloroplast</keyword>
<keyword id="KW-0903">Direct protein sequencing</keyword>
<keyword id="KW-0249">Electron transport</keyword>
<keyword id="KW-0408">Iron</keyword>
<keyword id="KW-0411">Iron-sulfur</keyword>
<keyword id="KW-0479">Metal-binding</keyword>
<keyword id="KW-0934">Plastid</keyword>
<keyword id="KW-1185">Reference proteome</keyword>
<keyword id="KW-0809">Transit peptide</keyword>
<keyword id="KW-0813">Transport</keyword>
<sequence>MAAALSLRAPFSLRAVAPPAPRVALAPAALSLAAAKQVRGARLRAQATYKVKLVTPEGEVELEVPDDVYILDQAEEEGIDLPYSCRAGSCSSCAGKLVSGEIDQSDQSFLDDDQMEAGWVLTCHAYPKSDIVIETHKEEELTA</sequence>
<feature type="transit peptide" description="Chloroplast" evidence="3">
    <location>
        <begin position="1"/>
        <end position="46"/>
    </location>
</feature>
<feature type="chain" id="PRO_0000008840" description="Ferredoxin, chloroplastic">
    <location>
        <begin position="47"/>
        <end position="143"/>
    </location>
</feature>
<feature type="domain" description="2Fe-2S ferredoxin-type" evidence="2">
    <location>
        <begin position="49"/>
        <end position="139"/>
    </location>
</feature>
<feature type="binding site" evidence="2">
    <location>
        <position position="85"/>
    </location>
    <ligand>
        <name>[2Fe-2S] cluster</name>
        <dbReference type="ChEBI" id="CHEBI:190135"/>
    </ligand>
</feature>
<feature type="binding site" evidence="2">
    <location>
        <position position="90"/>
    </location>
    <ligand>
        <name>[2Fe-2S] cluster</name>
        <dbReference type="ChEBI" id="CHEBI:190135"/>
    </ligand>
</feature>
<feature type="binding site" evidence="2">
    <location>
        <position position="93"/>
    </location>
    <ligand>
        <name>[2Fe-2S] cluster</name>
        <dbReference type="ChEBI" id="CHEBI:190135"/>
    </ligand>
</feature>
<feature type="binding site" evidence="2">
    <location>
        <position position="123"/>
    </location>
    <ligand>
        <name>[2Fe-2S] cluster</name>
        <dbReference type="ChEBI" id="CHEBI:190135"/>
    </ligand>
</feature>